<reference key="1">
    <citation type="journal article" date="2000" name="DNA Res.">
        <title>Prediction of the coding sequences of unidentified human genes. XVII. The complete sequences of 100 new cDNA clones from brain which code for large proteins in vitro.</title>
        <authorList>
            <person name="Nagase T."/>
            <person name="Kikuno R."/>
            <person name="Ishikawa K."/>
            <person name="Hirosawa M."/>
            <person name="Ohara O."/>
        </authorList>
    </citation>
    <scope>NUCLEOTIDE SEQUENCE [LARGE SCALE MRNA]</scope>
    <source>
        <tissue>Brain</tissue>
    </source>
</reference>
<reference key="2">
    <citation type="journal article" date="2004" name="Nat. Genet.">
        <title>Complete sequencing and characterization of 21,243 full-length human cDNAs.</title>
        <authorList>
            <person name="Ota T."/>
            <person name="Suzuki Y."/>
            <person name="Nishikawa T."/>
            <person name="Otsuki T."/>
            <person name="Sugiyama T."/>
            <person name="Irie R."/>
            <person name="Wakamatsu A."/>
            <person name="Hayashi K."/>
            <person name="Sato H."/>
            <person name="Nagai K."/>
            <person name="Kimura K."/>
            <person name="Makita H."/>
            <person name="Sekine M."/>
            <person name="Obayashi M."/>
            <person name="Nishi T."/>
            <person name="Shibahara T."/>
            <person name="Tanaka T."/>
            <person name="Ishii S."/>
            <person name="Yamamoto J."/>
            <person name="Saito K."/>
            <person name="Kawai Y."/>
            <person name="Isono Y."/>
            <person name="Nakamura Y."/>
            <person name="Nagahari K."/>
            <person name="Murakami K."/>
            <person name="Yasuda T."/>
            <person name="Iwayanagi T."/>
            <person name="Wagatsuma M."/>
            <person name="Shiratori A."/>
            <person name="Sudo H."/>
            <person name="Hosoiri T."/>
            <person name="Kaku Y."/>
            <person name="Kodaira H."/>
            <person name="Kondo H."/>
            <person name="Sugawara M."/>
            <person name="Takahashi M."/>
            <person name="Kanda K."/>
            <person name="Yokoi T."/>
            <person name="Furuya T."/>
            <person name="Kikkawa E."/>
            <person name="Omura Y."/>
            <person name="Abe K."/>
            <person name="Kamihara K."/>
            <person name="Katsuta N."/>
            <person name="Sato K."/>
            <person name="Tanikawa M."/>
            <person name="Yamazaki M."/>
            <person name="Ninomiya K."/>
            <person name="Ishibashi T."/>
            <person name="Yamashita H."/>
            <person name="Murakawa K."/>
            <person name="Fujimori K."/>
            <person name="Tanai H."/>
            <person name="Kimata M."/>
            <person name="Watanabe M."/>
            <person name="Hiraoka S."/>
            <person name="Chiba Y."/>
            <person name="Ishida S."/>
            <person name="Ono Y."/>
            <person name="Takiguchi S."/>
            <person name="Watanabe S."/>
            <person name="Yosida M."/>
            <person name="Hotuta T."/>
            <person name="Kusano J."/>
            <person name="Kanehori K."/>
            <person name="Takahashi-Fujii A."/>
            <person name="Hara H."/>
            <person name="Tanase T.-O."/>
            <person name="Nomura Y."/>
            <person name="Togiya S."/>
            <person name="Komai F."/>
            <person name="Hara R."/>
            <person name="Takeuchi K."/>
            <person name="Arita M."/>
            <person name="Imose N."/>
            <person name="Musashino K."/>
            <person name="Yuuki H."/>
            <person name="Oshima A."/>
            <person name="Sasaki N."/>
            <person name="Aotsuka S."/>
            <person name="Yoshikawa Y."/>
            <person name="Matsunawa H."/>
            <person name="Ichihara T."/>
            <person name="Shiohata N."/>
            <person name="Sano S."/>
            <person name="Moriya S."/>
            <person name="Momiyama H."/>
            <person name="Satoh N."/>
            <person name="Takami S."/>
            <person name="Terashima Y."/>
            <person name="Suzuki O."/>
            <person name="Nakagawa S."/>
            <person name="Senoh A."/>
            <person name="Mizoguchi H."/>
            <person name="Goto Y."/>
            <person name="Shimizu F."/>
            <person name="Wakebe H."/>
            <person name="Hishigaki H."/>
            <person name="Watanabe T."/>
            <person name="Sugiyama A."/>
            <person name="Takemoto M."/>
            <person name="Kawakami B."/>
            <person name="Yamazaki M."/>
            <person name="Watanabe K."/>
            <person name="Kumagai A."/>
            <person name="Itakura S."/>
            <person name="Fukuzumi Y."/>
            <person name="Fujimori Y."/>
            <person name="Komiyama M."/>
            <person name="Tashiro H."/>
            <person name="Tanigami A."/>
            <person name="Fujiwara T."/>
            <person name="Ono T."/>
            <person name="Yamada K."/>
            <person name="Fujii Y."/>
            <person name="Ozaki K."/>
            <person name="Hirao M."/>
            <person name="Ohmori Y."/>
            <person name="Kawabata A."/>
            <person name="Hikiji T."/>
            <person name="Kobatake N."/>
            <person name="Inagaki H."/>
            <person name="Ikema Y."/>
            <person name="Okamoto S."/>
            <person name="Okitani R."/>
            <person name="Kawakami T."/>
            <person name="Noguchi S."/>
            <person name="Itoh T."/>
            <person name="Shigeta K."/>
            <person name="Senba T."/>
            <person name="Matsumura K."/>
            <person name="Nakajima Y."/>
            <person name="Mizuno T."/>
            <person name="Morinaga M."/>
            <person name="Sasaki M."/>
            <person name="Togashi T."/>
            <person name="Oyama M."/>
            <person name="Hata H."/>
            <person name="Watanabe M."/>
            <person name="Komatsu T."/>
            <person name="Mizushima-Sugano J."/>
            <person name="Satoh T."/>
            <person name="Shirai Y."/>
            <person name="Takahashi Y."/>
            <person name="Nakagawa K."/>
            <person name="Okumura K."/>
            <person name="Nagase T."/>
            <person name="Nomura N."/>
            <person name="Kikuchi H."/>
            <person name="Masuho Y."/>
            <person name="Yamashita R."/>
            <person name="Nakai K."/>
            <person name="Yada T."/>
            <person name="Nakamura Y."/>
            <person name="Ohara O."/>
            <person name="Isogai T."/>
            <person name="Sugano S."/>
        </authorList>
    </citation>
    <scope>NUCLEOTIDE SEQUENCE [LARGE SCALE MRNA]</scope>
    <source>
        <tissue>Placenta</tissue>
    </source>
</reference>
<reference key="3">
    <citation type="journal article" date="2006" name="Nature">
        <title>The DNA sequence and biological annotation of human chromosome 1.</title>
        <authorList>
            <person name="Gregory S.G."/>
            <person name="Barlow K.F."/>
            <person name="McLay K.E."/>
            <person name="Kaul R."/>
            <person name="Swarbreck D."/>
            <person name="Dunham A."/>
            <person name="Scott C.E."/>
            <person name="Howe K.L."/>
            <person name="Woodfine K."/>
            <person name="Spencer C.C.A."/>
            <person name="Jones M.C."/>
            <person name="Gillson C."/>
            <person name="Searle S."/>
            <person name="Zhou Y."/>
            <person name="Kokocinski F."/>
            <person name="McDonald L."/>
            <person name="Evans R."/>
            <person name="Phillips K."/>
            <person name="Atkinson A."/>
            <person name="Cooper R."/>
            <person name="Jones C."/>
            <person name="Hall R.E."/>
            <person name="Andrews T.D."/>
            <person name="Lloyd C."/>
            <person name="Ainscough R."/>
            <person name="Almeida J.P."/>
            <person name="Ambrose K.D."/>
            <person name="Anderson F."/>
            <person name="Andrew R.W."/>
            <person name="Ashwell R.I.S."/>
            <person name="Aubin K."/>
            <person name="Babbage A.K."/>
            <person name="Bagguley C.L."/>
            <person name="Bailey J."/>
            <person name="Beasley H."/>
            <person name="Bethel G."/>
            <person name="Bird C.P."/>
            <person name="Bray-Allen S."/>
            <person name="Brown J.Y."/>
            <person name="Brown A.J."/>
            <person name="Buckley D."/>
            <person name="Burton J."/>
            <person name="Bye J."/>
            <person name="Carder C."/>
            <person name="Chapman J.C."/>
            <person name="Clark S.Y."/>
            <person name="Clarke G."/>
            <person name="Clee C."/>
            <person name="Cobley V."/>
            <person name="Collier R.E."/>
            <person name="Corby N."/>
            <person name="Coville G.J."/>
            <person name="Davies J."/>
            <person name="Deadman R."/>
            <person name="Dunn M."/>
            <person name="Earthrowl M."/>
            <person name="Ellington A.G."/>
            <person name="Errington H."/>
            <person name="Frankish A."/>
            <person name="Frankland J."/>
            <person name="French L."/>
            <person name="Garner P."/>
            <person name="Garnett J."/>
            <person name="Gay L."/>
            <person name="Ghori M.R.J."/>
            <person name="Gibson R."/>
            <person name="Gilby L.M."/>
            <person name="Gillett W."/>
            <person name="Glithero R.J."/>
            <person name="Grafham D.V."/>
            <person name="Griffiths C."/>
            <person name="Griffiths-Jones S."/>
            <person name="Grocock R."/>
            <person name="Hammond S."/>
            <person name="Harrison E.S.I."/>
            <person name="Hart E."/>
            <person name="Haugen E."/>
            <person name="Heath P.D."/>
            <person name="Holmes S."/>
            <person name="Holt K."/>
            <person name="Howden P.J."/>
            <person name="Hunt A.R."/>
            <person name="Hunt S.E."/>
            <person name="Hunter G."/>
            <person name="Isherwood J."/>
            <person name="James R."/>
            <person name="Johnson C."/>
            <person name="Johnson D."/>
            <person name="Joy A."/>
            <person name="Kay M."/>
            <person name="Kershaw J.K."/>
            <person name="Kibukawa M."/>
            <person name="Kimberley A.M."/>
            <person name="King A."/>
            <person name="Knights A.J."/>
            <person name="Lad H."/>
            <person name="Laird G."/>
            <person name="Lawlor S."/>
            <person name="Leongamornlert D.A."/>
            <person name="Lloyd D.M."/>
            <person name="Loveland J."/>
            <person name="Lovell J."/>
            <person name="Lush M.J."/>
            <person name="Lyne R."/>
            <person name="Martin S."/>
            <person name="Mashreghi-Mohammadi M."/>
            <person name="Matthews L."/>
            <person name="Matthews N.S.W."/>
            <person name="McLaren S."/>
            <person name="Milne S."/>
            <person name="Mistry S."/>
            <person name="Moore M.J.F."/>
            <person name="Nickerson T."/>
            <person name="O'Dell C.N."/>
            <person name="Oliver K."/>
            <person name="Palmeiri A."/>
            <person name="Palmer S.A."/>
            <person name="Parker A."/>
            <person name="Patel D."/>
            <person name="Pearce A.V."/>
            <person name="Peck A.I."/>
            <person name="Pelan S."/>
            <person name="Phelps K."/>
            <person name="Phillimore B.J."/>
            <person name="Plumb R."/>
            <person name="Rajan J."/>
            <person name="Raymond C."/>
            <person name="Rouse G."/>
            <person name="Saenphimmachak C."/>
            <person name="Sehra H.K."/>
            <person name="Sheridan E."/>
            <person name="Shownkeen R."/>
            <person name="Sims S."/>
            <person name="Skuce C.D."/>
            <person name="Smith M."/>
            <person name="Steward C."/>
            <person name="Subramanian S."/>
            <person name="Sycamore N."/>
            <person name="Tracey A."/>
            <person name="Tromans A."/>
            <person name="Van Helmond Z."/>
            <person name="Wall M."/>
            <person name="Wallis J.M."/>
            <person name="White S."/>
            <person name="Whitehead S.L."/>
            <person name="Wilkinson J.E."/>
            <person name="Willey D.L."/>
            <person name="Williams H."/>
            <person name="Wilming L."/>
            <person name="Wray P.W."/>
            <person name="Wu Z."/>
            <person name="Coulson A."/>
            <person name="Vaudin M."/>
            <person name="Sulston J.E."/>
            <person name="Durbin R.M."/>
            <person name="Hubbard T."/>
            <person name="Wooster R."/>
            <person name="Dunham I."/>
            <person name="Carter N.P."/>
            <person name="McVean G."/>
            <person name="Ross M.T."/>
            <person name="Harrow J."/>
            <person name="Olson M.V."/>
            <person name="Beck S."/>
            <person name="Rogers J."/>
            <person name="Bentley D.R."/>
        </authorList>
    </citation>
    <scope>NUCLEOTIDE SEQUENCE [LARGE SCALE GENOMIC DNA]</scope>
</reference>
<reference key="4">
    <citation type="submission" date="2005-07" db="EMBL/GenBank/DDBJ databases">
        <authorList>
            <person name="Mural R.J."/>
            <person name="Istrail S."/>
            <person name="Sutton G."/>
            <person name="Florea L."/>
            <person name="Halpern A.L."/>
            <person name="Mobarry C.M."/>
            <person name="Lippert R."/>
            <person name="Walenz B."/>
            <person name="Shatkay H."/>
            <person name="Dew I."/>
            <person name="Miller J.R."/>
            <person name="Flanigan M.J."/>
            <person name="Edwards N.J."/>
            <person name="Bolanos R."/>
            <person name="Fasulo D."/>
            <person name="Halldorsson B.V."/>
            <person name="Hannenhalli S."/>
            <person name="Turner R."/>
            <person name="Yooseph S."/>
            <person name="Lu F."/>
            <person name="Nusskern D.R."/>
            <person name="Shue B.C."/>
            <person name="Zheng X.H."/>
            <person name="Zhong F."/>
            <person name="Delcher A.L."/>
            <person name="Huson D.H."/>
            <person name="Kravitz S.A."/>
            <person name="Mouchard L."/>
            <person name="Reinert K."/>
            <person name="Remington K.A."/>
            <person name="Clark A.G."/>
            <person name="Waterman M.S."/>
            <person name="Eichler E.E."/>
            <person name="Adams M.D."/>
            <person name="Hunkapiller M.W."/>
            <person name="Myers E.W."/>
            <person name="Venter J.C."/>
        </authorList>
    </citation>
    <scope>NUCLEOTIDE SEQUENCE [LARGE SCALE GENOMIC DNA]</scope>
</reference>
<reference key="5">
    <citation type="journal article" date="2004" name="Genome Res.">
        <title>The status, quality, and expansion of the NIH full-length cDNA project: the Mammalian Gene Collection (MGC).</title>
        <authorList>
            <consortium name="The MGC Project Team"/>
        </authorList>
    </citation>
    <scope>NUCLEOTIDE SEQUENCE [LARGE SCALE MRNA]</scope>
</reference>
<reference key="6">
    <citation type="submission" date="1998-12" db="EMBL/GenBank/DDBJ databases">
        <authorList>
            <person name="Hui R.T."/>
            <person name="Liu B."/>
            <person name="Zhao B."/>
            <person name="Wang X.Y."/>
        </authorList>
    </citation>
    <scope>NUCLEOTIDE SEQUENCE [LARGE SCALE MRNA] OF 425-609</scope>
    <source>
        <tissue>Aorta</tissue>
    </source>
</reference>
<reference key="7">
    <citation type="journal article" date="2011" name="BMC Syst. Biol.">
        <title>Initial characterization of the human central proteome.</title>
        <authorList>
            <person name="Burkard T.R."/>
            <person name="Planyavsky M."/>
            <person name="Kaupe I."/>
            <person name="Breitwieser F.P."/>
            <person name="Buerckstuemmer T."/>
            <person name="Bennett K.L."/>
            <person name="Superti-Furga G."/>
            <person name="Colinge J."/>
        </authorList>
    </citation>
    <scope>IDENTIFICATION BY MASS SPECTROMETRY [LARGE SCALE ANALYSIS]</scope>
</reference>
<reference key="8">
    <citation type="journal article" date="2014" name="Nat. Struct. Mol. Biol.">
        <title>Uncovering global SUMOylation signaling networks in a site-specific manner.</title>
        <authorList>
            <person name="Hendriks I.A."/>
            <person name="D'Souza R.C."/>
            <person name="Yang B."/>
            <person name="Verlaan-de Vries M."/>
            <person name="Mann M."/>
            <person name="Vertegaal A.C."/>
        </authorList>
    </citation>
    <scope>SUMOYLATION [LARGE SCALE ANALYSIS] AT LYS-13</scope>
    <scope>IDENTIFICATION BY MASS SPECTROMETRY [LARGE SCALE ANALYSIS]</scope>
</reference>
<reference key="9">
    <citation type="journal article" date="2017" name="Nat. Struct. Mol. Biol.">
        <title>Site-specific mapping of the human SUMO proteome reveals co-modification with phosphorylation.</title>
        <authorList>
            <person name="Hendriks I.A."/>
            <person name="Lyon D."/>
            <person name="Young C."/>
            <person name="Jensen L.J."/>
            <person name="Vertegaal A.C."/>
            <person name="Nielsen M.L."/>
        </authorList>
    </citation>
    <scope>SUMOYLATION [LARGE SCALE ANALYSIS] AT LYS-13 AND LYS-384</scope>
    <scope>IDENTIFICATION BY MASS SPECTROMETRY [LARGE SCALE ANALYSIS]</scope>
</reference>
<dbReference type="EMBL" id="AB040946">
    <property type="protein sequence ID" value="BAA96037.1"/>
    <property type="status" value="ALT_INIT"/>
    <property type="molecule type" value="mRNA"/>
</dbReference>
<dbReference type="EMBL" id="AK056711">
    <property type="protein sequence ID" value="BAG51796.1"/>
    <property type="molecule type" value="mRNA"/>
</dbReference>
<dbReference type="EMBL" id="AL008639">
    <property type="status" value="NOT_ANNOTATED_CDS"/>
    <property type="molecule type" value="Genomic_DNA"/>
</dbReference>
<dbReference type="EMBL" id="CH471067">
    <property type="protein sequence ID" value="EAW90775.1"/>
    <property type="molecule type" value="Genomic_DNA"/>
</dbReference>
<dbReference type="EMBL" id="BC131624">
    <property type="protein sequence ID" value="AAI31625.1"/>
    <property type="molecule type" value="mRNA"/>
</dbReference>
<dbReference type="EMBL" id="AF111706">
    <property type="protein sequence ID" value="AAM12422.1"/>
    <property type="status" value="ALT_INIT"/>
    <property type="molecule type" value="mRNA"/>
</dbReference>
<dbReference type="CCDS" id="CCDS1254.1"/>
<dbReference type="RefSeq" id="NP_060012.3">
    <property type="nucleotide sequence ID" value="NM_017542.4"/>
</dbReference>
<dbReference type="RefSeq" id="XP_005245427.1">
    <property type="nucleotide sequence ID" value="XM_005245370.5"/>
</dbReference>
<dbReference type="RefSeq" id="XP_011508116.1">
    <property type="nucleotide sequence ID" value="XM_011509814.3"/>
</dbReference>
<dbReference type="RefSeq" id="XP_016857403.1">
    <property type="nucleotide sequence ID" value="XM_017001914.3"/>
</dbReference>
<dbReference type="RefSeq" id="XP_047282152.1">
    <property type="nucleotide sequence ID" value="XM_047426196.1"/>
</dbReference>
<dbReference type="RefSeq" id="XP_054193868.1">
    <property type="nucleotide sequence ID" value="XM_054337893.1"/>
</dbReference>
<dbReference type="RefSeq" id="XP_054193869.1">
    <property type="nucleotide sequence ID" value="XM_054337894.1"/>
</dbReference>
<dbReference type="RefSeq" id="XP_054193870.1">
    <property type="nucleotide sequence ID" value="XM_054337895.1"/>
</dbReference>
<dbReference type="RefSeq" id="XP_054193871.1">
    <property type="nucleotide sequence ID" value="XM_054337896.1"/>
</dbReference>
<dbReference type="SMR" id="Q9P215"/>
<dbReference type="BioGRID" id="121682">
    <property type="interactions" value="31"/>
</dbReference>
<dbReference type="FunCoup" id="Q9P215">
    <property type="interactions" value="2568"/>
</dbReference>
<dbReference type="IntAct" id="Q9P215">
    <property type="interactions" value="21"/>
</dbReference>
<dbReference type="MINT" id="Q9P215"/>
<dbReference type="STRING" id="9606.ENSP00000356849"/>
<dbReference type="iPTMnet" id="Q9P215"/>
<dbReference type="PhosphoSitePlus" id="Q9P215"/>
<dbReference type="BioMuta" id="POGK"/>
<dbReference type="DMDM" id="46577131"/>
<dbReference type="jPOST" id="Q9P215"/>
<dbReference type="MassIVE" id="Q9P215"/>
<dbReference type="PaxDb" id="9606-ENSP00000356849"/>
<dbReference type="PeptideAtlas" id="Q9P215"/>
<dbReference type="ProteomicsDB" id="83707"/>
<dbReference type="Pumba" id="Q9P215"/>
<dbReference type="Antibodypedia" id="1662">
    <property type="antibodies" value="351 antibodies from 25 providers"/>
</dbReference>
<dbReference type="DNASU" id="57645"/>
<dbReference type="Ensembl" id="ENST00000367875.1">
    <property type="protein sequence ID" value="ENSP00000356849.1"/>
    <property type="gene ID" value="ENSG00000143157.12"/>
</dbReference>
<dbReference type="Ensembl" id="ENST00000367876.9">
    <property type="protein sequence ID" value="ENSP00000356850.4"/>
    <property type="gene ID" value="ENSG00000143157.12"/>
</dbReference>
<dbReference type="GeneID" id="57645"/>
<dbReference type="KEGG" id="hsa:57645"/>
<dbReference type="MANE-Select" id="ENST00000367876.9">
    <property type="protein sequence ID" value="ENSP00000356850.4"/>
    <property type="RefSeq nucleotide sequence ID" value="NM_017542.5"/>
    <property type="RefSeq protein sequence ID" value="NP_060012.3"/>
</dbReference>
<dbReference type="UCSC" id="uc001gdt.2">
    <property type="organism name" value="human"/>
</dbReference>
<dbReference type="AGR" id="HGNC:18800"/>
<dbReference type="CTD" id="57645"/>
<dbReference type="DisGeNET" id="57645"/>
<dbReference type="GeneCards" id="POGK"/>
<dbReference type="HGNC" id="HGNC:18800">
    <property type="gene designation" value="POGK"/>
</dbReference>
<dbReference type="HPA" id="ENSG00000143157">
    <property type="expression patterns" value="Low tissue specificity"/>
</dbReference>
<dbReference type="MIM" id="620039">
    <property type="type" value="gene"/>
</dbReference>
<dbReference type="neXtProt" id="NX_Q9P215"/>
<dbReference type="OpenTargets" id="ENSG00000143157"/>
<dbReference type="PharmGKB" id="PA38684"/>
<dbReference type="VEuPathDB" id="HostDB:ENSG00000143157"/>
<dbReference type="eggNOG" id="KOG3105">
    <property type="taxonomic scope" value="Eukaryota"/>
</dbReference>
<dbReference type="GeneTree" id="ENSGT00440000039028"/>
<dbReference type="HOGENOM" id="CLU_031292_0_0_1"/>
<dbReference type="InParanoid" id="Q9P215"/>
<dbReference type="OMA" id="PKECDAE"/>
<dbReference type="OrthoDB" id="5422061at2759"/>
<dbReference type="PAN-GO" id="Q9P215">
    <property type="GO annotations" value="2 GO annotations based on evolutionary models"/>
</dbReference>
<dbReference type="PhylomeDB" id="Q9P215"/>
<dbReference type="TreeFam" id="TF332951"/>
<dbReference type="PathwayCommons" id="Q9P215"/>
<dbReference type="SignaLink" id="Q9P215"/>
<dbReference type="BioGRID-ORCS" id="57645">
    <property type="hits" value="9 hits in 1159 CRISPR screens"/>
</dbReference>
<dbReference type="ChiTaRS" id="POGK">
    <property type="organism name" value="human"/>
</dbReference>
<dbReference type="GenomeRNAi" id="57645"/>
<dbReference type="Pharos" id="Q9P215">
    <property type="development level" value="Tdark"/>
</dbReference>
<dbReference type="PRO" id="PR:Q9P215"/>
<dbReference type="Proteomes" id="UP000005640">
    <property type="component" value="Chromosome 1"/>
</dbReference>
<dbReference type="RNAct" id="Q9P215">
    <property type="molecule type" value="protein"/>
</dbReference>
<dbReference type="Bgee" id="ENSG00000143157">
    <property type="expression patterns" value="Expressed in Brodmann (1909) area 46 and 202 other cell types or tissues"/>
</dbReference>
<dbReference type="ExpressionAtlas" id="Q9P215">
    <property type="expression patterns" value="baseline and differential"/>
</dbReference>
<dbReference type="GO" id="GO:0005654">
    <property type="term" value="C:nucleoplasm"/>
    <property type="evidence" value="ECO:0000314"/>
    <property type="project" value="HPA"/>
</dbReference>
<dbReference type="GO" id="GO:0005634">
    <property type="term" value="C:nucleus"/>
    <property type="evidence" value="ECO:0000318"/>
    <property type="project" value="GO_Central"/>
</dbReference>
<dbReference type="GO" id="GO:0003677">
    <property type="term" value="F:DNA binding"/>
    <property type="evidence" value="ECO:0000318"/>
    <property type="project" value="GO_Central"/>
</dbReference>
<dbReference type="GO" id="GO:0006355">
    <property type="term" value="P:regulation of DNA-templated transcription"/>
    <property type="evidence" value="ECO:0007669"/>
    <property type="project" value="InterPro"/>
</dbReference>
<dbReference type="CDD" id="cd07765">
    <property type="entry name" value="KRAB_A-box"/>
    <property type="match status" value="1"/>
</dbReference>
<dbReference type="Gene3D" id="6.10.140.140">
    <property type="match status" value="1"/>
</dbReference>
<dbReference type="Gene3D" id="1.10.10.60">
    <property type="entry name" value="Homeodomain-like"/>
    <property type="match status" value="2"/>
</dbReference>
<dbReference type="InterPro" id="IPR003655">
    <property type="entry name" value="aKRAB"/>
</dbReference>
<dbReference type="InterPro" id="IPR018586">
    <property type="entry name" value="Brinker_DNA-bd"/>
</dbReference>
<dbReference type="InterPro" id="IPR050863">
    <property type="entry name" value="CenT-Element_Derived"/>
</dbReference>
<dbReference type="InterPro" id="IPR004875">
    <property type="entry name" value="DDE_SF_endonuclease_dom"/>
</dbReference>
<dbReference type="InterPro" id="IPR009057">
    <property type="entry name" value="Homeodomain-like_sf"/>
</dbReference>
<dbReference type="InterPro" id="IPR006600">
    <property type="entry name" value="HTH_CenpB_DNA-bd_dom"/>
</dbReference>
<dbReference type="InterPro" id="IPR001909">
    <property type="entry name" value="KRAB"/>
</dbReference>
<dbReference type="InterPro" id="IPR036051">
    <property type="entry name" value="KRAB_dom_sf"/>
</dbReference>
<dbReference type="PANTHER" id="PTHR19303:SF74">
    <property type="entry name" value="POGO TRANSPOSABLE ELEMENT WITH KRAB DOMAIN"/>
    <property type="match status" value="1"/>
</dbReference>
<dbReference type="PANTHER" id="PTHR19303">
    <property type="entry name" value="TRANSPOSON"/>
    <property type="match status" value="1"/>
</dbReference>
<dbReference type="Pfam" id="PF09607">
    <property type="entry name" value="BrkDBD"/>
    <property type="match status" value="1"/>
</dbReference>
<dbReference type="Pfam" id="PF03184">
    <property type="entry name" value="DDE_1"/>
    <property type="match status" value="1"/>
</dbReference>
<dbReference type="Pfam" id="PF03221">
    <property type="entry name" value="HTH_Tnp_Tc5"/>
    <property type="match status" value="1"/>
</dbReference>
<dbReference type="Pfam" id="PF01352">
    <property type="entry name" value="KRAB"/>
    <property type="match status" value="1"/>
</dbReference>
<dbReference type="SMART" id="SM00674">
    <property type="entry name" value="CENPB"/>
    <property type="match status" value="1"/>
</dbReference>
<dbReference type="SMART" id="SM00349">
    <property type="entry name" value="KRAB"/>
    <property type="match status" value="1"/>
</dbReference>
<dbReference type="SUPFAM" id="SSF46689">
    <property type="entry name" value="Homeodomain-like"/>
    <property type="match status" value="1"/>
</dbReference>
<dbReference type="SUPFAM" id="SSF109640">
    <property type="entry name" value="KRAB domain (Kruppel-associated box)"/>
    <property type="match status" value="1"/>
</dbReference>
<dbReference type="PROSITE" id="PS51253">
    <property type="entry name" value="HTH_CENPB"/>
    <property type="match status" value="1"/>
</dbReference>
<dbReference type="PROSITE" id="PS50805">
    <property type="entry name" value="KRAB"/>
    <property type="match status" value="1"/>
</dbReference>
<organism>
    <name type="scientific">Homo sapiens</name>
    <name type="common">Human</name>
    <dbReference type="NCBI Taxonomy" id="9606"/>
    <lineage>
        <taxon>Eukaryota</taxon>
        <taxon>Metazoa</taxon>
        <taxon>Chordata</taxon>
        <taxon>Craniata</taxon>
        <taxon>Vertebrata</taxon>
        <taxon>Euteleostomi</taxon>
        <taxon>Mammalia</taxon>
        <taxon>Eutheria</taxon>
        <taxon>Euarchontoglires</taxon>
        <taxon>Primates</taxon>
        <taxon>Haplorrhini</taxon>
        <taxon>Catarrhini</taxon>
        <taxon>Hominidae</taxon>
        <taxon>Homo</taxon>
    </lineage>
</organism>
<proteinExistence type="evidence at protein level"/>
<sequence>MESTAYPLNLSLKEEEEEEEIQSRELEDGPADMQKVRICSEGGWVPALFDEVAIYFSDEEWEVLTEQQKALYREVMRMNYETVLSLEFPFPKPDMITRLEGEEESQNSDEWQLQGGTSAENEESDVKPPDWPNPMNATSQFPQPQHFDSFGLRLPRDITELPEWSEGYPFYMAMGFPGYDLSADDIAGKFQFSRGMRRSYDAGFKLMVVEYAESTNNCQAAKQFGVLEKNVRDWRKVKPQLQNAHAMRRAFRGPKNGRFALVDQRVAEYVRYMQAKGDPITREAMQLKALEIAQEMNIPEKGFKASLGWCRRMMRRYDLSLRHKVPVPQHLPEDLTEKLVTYQRSVLALRRAHDYEVAQMGNADETPICLEVPSRVTVDNQGEKPVLVKTPGREKLKITAMLGVLADGRKLPPYIILRGTYIPPGKFPSGMEIRCHRYGWMTEDLMQDWLEVVWRRRTGAVPKQRGMLILNGFRGHATDSVKNSMESMNTDMVIIPGGLTSQLQVLDVVVYKPLNDSVRAQYSNWLLAGNLALSPTGNAKKPPLGLFLEWVMVAWNSISSESIVQGFKKCHISSNLEEEDDVLWEIESELPGGGEPPKDCDTESMAESN</sequence>
<accession>Q9P215</accession>
<accession>Q5TIJ1</accession>
<accession>Q8TE07</accession>
<gene>
    <name type="primary">POGK</name>
    <name type="synonym">KIAA1513</name>
    <name type="ORF">LST003</name>
    <name type="ORF">SLTP003</name>
</gene>
<keyword id="KW-0175">Coiled coil</keyword>
<keyword id="KW-0217">Developmental protein</keyword>
<keyword id="KW-0238">DNA-binding</keyword>
<keyword id="KW-1017">Isopeptide bond</keyword>
<keyword id="KW-0539">Nucleus</keyword>
<keyword id="KW-1267">Proteomics identification</keyword>
<keyword id="KW-1185">Reference proteome</keyword>
<keyword id="KW-0832">Ubl conjugation</keyword>
<comment type="interaction">
    <interactant intactId="EBI-2555775">
        <id>Q9P215</id>
    </interactant>
    <interactant intactId="EBI-352572">
        <id>P08238</id>
        <label>HSP90AB1</label>
    </interactant>
    <organismsDiffer>false</organismsDiffer>
    <experiments>2</experiments>
</comment>
<comment type="subcellular location">
    <subcellularLocation>
        <location evidence="5">Nucleus</location>
    </subcellularLocation>
</comment>
<comment type="sequence caution" evidence="5">
    <conflict type="erroneous initiation">
        <sequence resource="EMBL-CDS" id="AAM12422"/>
    </conflict>
</comment>
<comment type="sequence caution" evidence="5">
    <conflict type="erroneous initiation">
        <sequence resource="EMBL-CDS" id="BAA96037"/>
    </conflict>
</comment>
<feature type="chain" id="PRO_0000126131" description="Pogo transposable element with KRAB domain">
    <location>
        <begin position="1"/>
        <end position="609"/>
    </location>
</feature>
<feature type="domain" description="KRAB" evidence="2">
    <location>
        <begin position="47"/>
        <end position="118"/>
    </location>
</feature>
<feature type="domain" description="HTH CENPB-type" evidence="3">
    <location>
        <begin position="250"/>
        <end position="323"/>
    </location>
</feature>
<feature type="domain" description="DDE-1" evidence="1">
    <location>
        <begin position="353"/>
        <end position="567"/>
    </location>
</feature>
<feature type="region of interest" description="Disordered" evidence="4">
    <location>
        <begin position="1"/>
        <end position="28"/>
    </location>
</feature>
<feature type="region of interest" description="Disordered" evidence="4">
    <location>
        <begin position="100"/>
        <end position="127"/>
    </location>
</feature>
<feature type="region of interest" description="Disordered" evidence="4">
    <location>
        <begin position="588"/>
        <end position="609"/>
    </location>
</feature>
<feature type="coiled-coil region" evidence="1">
    <location>
        <begin position="8"/>
        <end position="28"/>
    </location>
</feature>
<feature type="compositionally biased region" description="Polar residues" evidence="4">
    <location>
        <begin position="108"/>
        <end position="119"/>
    </location>
</feature>
<feature type="cross-link" description="Glycyl lysine isopeptide (Lys-Gly) (interchain with G-Cter in SUMO2)" evidence="6 7">
    <location>
        <position position="13"/>
    </location>
</feature>
<feature type="cross-link" description="Glycyl lysine isopeptide (Lys-Gly) (interchain with G-Cter in SUMO2)" evidence="7">
    <location>
        <position position="384"/>
    </location>
</feature>
<protein>
    <recommendedName>
        <fullName>Pogo transposable element with KRAB domain</fullName>
    </recommendedName>
</protein>
<name>POGK_HUMAN</name>
<evidence type="ECO:0000255" key="1"/>
<evidence type="ECO:0000255" key="2">
    <source>
        <dbReference type="PROSITE-ProRule" id="PRU00119"/>
    </source>
</evidence>
<evidence type="ECO:0000255" key="3">
    <source>
        <dbReference type="PROSITE-ProRule" id="PRU00583"/>
    </source>
</evidence>
<evidence type="ECO:0000256" key="4">
    <source>
        <dbReference type="SAM" id="MobiDB-lite"/>
    </source>
</evidence>
<evidence type="ECO:0000305" key="5"/>
<evidence type="ECO:0007744" key="6">
    <source>
    </source>
</evidence>
<evidence type="ECO:0007744" key="7">
    <source>
    </source>
</evidence>